<sequence>MTVPLIQNPEVLESRLKEIPAEPGVYLMRDATDQILYVGKSKKLRSRVRSYFRFTGDLSPRIQRMVVQVCEIEFIVTDNESEALALEDNLIKTYQPPYNVLLKEDKKYPYLCITWSEPYPQIYITRHRRLNQNQDKYYGPYTDVGLLRYTLGLVKRIFPLRQRPKPLYKDRPCLNYDIGRCPGVCQGLISPEAYRKTVAQVAMIFQGQTDELIRELKEKMAQAAQQENYEAAARYRDQIRGLEQLGQSQKVSLPNSTASRDAIALAMNDSRACIQLFQVRAGKLVGRLGFVAENRGDDPALILQRVLQEHYQYCDPVEIPSEILTQYELPDRDFLESWLSQKKGRKVSLLAPQRQSKAELIELVERNAQLELARSQRLAEREAAALERLAEVLDLPEPPRRLEAYDISHIQGSDAVGSQVVFIDGLPAKQHYRRYKIRNPQVRPGHSDDFASHAEVARRRFSKMTSEDQPDLVLIDGGKGQLAAVMAVLAELGLDHLPVFALAKREEEIFRPGDPEPLRLPPQDPARLLLQRLRDEAHRFALAYHRQQRKLRQQASVLEEIPGLGKQRQKLLMEAFRSLARIQVATEEQLAQVPGIGPKLARQIYRYFHPEAETELPATAE</sequence>
<organism>
    <name type="scientific">Synechococcus sp. (strain JA-3-3Ab)</name>
    <name type="common">Cyanobacteria bacterium Yellowstone A-Prime</name>
    <dbReference type="NCBI Taxonomy" id="321327"/>
    <lineage>
        <taxon>Bacteria</taxon>
        <taxon>Bacillati</taxon>
        <taxon>Cyanobacteriota</taxon>
        <taxon>Cyanophyceae</taxon>
        <taxon>Synechococcales</taxon>
        <taxon>Synechococcaceae</taxon>
        <taxon>Synechococcus</taxon>
    </lineage>
</organism>
<comment type="function">
    <text evidence="1">The UvrABC repair system catalyzes the recognition and processing of DNA lesions. UvrC both incises the 5' and 3' sides of the lesion. The N-terminal half is responsible for the 3' incision and the C-terminal half is responsible for the 5' incision.</text>
</comment>
<comment type="subunit">
    <text evidence="1">Interacts with UvrB in an incision complex.</text>
</comment>
<comment type="subcellular location">
    <subcellularLocation>
        <location evidence="1">Cytoplasm</location>
    </subcellularLocation>
</comment>
<comment type="similarity">
    <text evidence="1">Belongs to the UvrC family.</text>
</comment>
<proteinExistence type="inferred from homology"/>
<dbReference type="EMBL" id="CP000239">
    <property type="protein sequence ID" value="ABC98431.1"/>
    <property type="molecule type" value="Genomic_DNA"/>
</dbReference>
<dbReference type="RefSeq" id="WP_011429122.1">
    <property type="nucleotide sequence ID" value="NC_007775.1"/>
</dbReference>
<dbReference type="SMR" id="Q2JXP8"/>
<dbReference type="STRING" id="321327.CYA_0207"/>
<dbReference type="KEGG" id="cya:CYA_0207"/>
<dbReference type="eggNOG" id="COG0322">
    <property type="taxonomic scope" value="Bacteria"/>
</dbReference>
<dbReference type="HOGENOM" id="CLU_014841_3_2_3"/>
<dbReference type="OrthoDB" id="9804933at2"/>
<dbReference type="Proteomes" id="UP000008818">
    <property type="component" value="Chromosome"/>
</dbReference>
<dbReference type="GO" id="GO:0005737">
    <property type="term" value="C:cytoplasm"/>
    <property type="evidence" value="ECO:0007669"/>
    <property type="project" value="UniProtKB-SubCell"/>
</dbReference>
<dbReference type="GO" id="GO:0009380">
    <property type="term" value="C:excinuclease repair complex"/>
    <property type="evidence" value="ECO:0007669"/>
    <property type="project" value="InterPro"/>
</dbReference>
<dbReference type="GO" id="GO:0003677">
    <property type="term" value="F:DNA binding"/>
    <property type="evidence" value="ECO:0007669"/>
    <property type="project" value="UniProtKB-UniRule"/>
</dbReference>
<dbReference type="GO" id="GO:0009381">
    <property type="term" value="F:excinuclease ABC activity"/>
    <property type="evidence" value="ECO:0007669"/>
    <property type="project" value="UniProtKB-UniRule"/>
</dbReference>
<dbReference type="GO" id="GO:0006289">
    <property type="term" value="P:nucleotide-excision repair"/>
    <property type="evidence" value="ECO:0007669"/>
    <property type="project" value="UniProtKB-UniRule"/>
</dbReference>
<dbReference type="GO" id="GO:0009432">
    <property type="term" value="P:SOS response"/>
    <property type="evidence" value="ECO:0007669"/>
    <property type="project" value="UniProtKB-UniRule"/>
</dbReference>
<dbReference type="CDD" id="cd10434">
    <property type="entry name" value="GIY-YIG_UvrC_Cho"/>
    <property type="match status" value="1"/>
</dbReference>
<dbReference type="FunFam" id="3.40.1440.10:FF:000001">
    <property type="entry name" value="UvrABC system protein C"/>
    <property type="match status" value="1"/>
</dbReference>
<dbReference type="Gene3D" id="1.10.150.20">
    <property type="entry name" value="5' to 3' exonuclease, C-terminal subdomain"/>
    <property type="match status" value="1"/>
</dbReference>
<dbReference type="Gene3D" id="3.40.1440.10">
    <property type="entry name" value="GIY-YIG endonuclease"/>
    <property type="match status" value="1"/>
</dbReference>
<dbReference type="Gene3D" id="4.10.860.10">
    <property type="entry name" value="UVR domain"/>
    <property type="match status" value="1"/>
</dbReference>
<dbReference type="Gene3D" id="3.30.420.340">
    <property type="entry name" value="UvrC, RNAse H endonuclease domain"/>
    <property type="match status" value="1"/>
</dbReference>
<dbReference type="HAMAP" id="MF_00203">
    <property type="entry name" value="UvrC"/>
    <property type="match status" value="1"/>
</dbReference>
<dbReference type="InterPro" id="IPR041663">
    <property type="entry name" value="DisA/LigA_HHH"/>
</dbReference>
<dbReference type="InterPro" id="IPR000305">
    <property type="entry name" value="GIY-YIG_endonuc"/>
</dbReference>
<dbReference type="InterPro" id="IPR035901">
    <property type="entry name" value="GIY-YIG_endonuc_sf"/>
</dbReference>
<dbReference type="InterPro" id="IPR047296">
    <property type="entry name" value="GIY-YIG_UvrC_Cho"/>
</dbReference>
<dbReference type="InterPro" id="IPR003583">
    <property type="entry name" value="Hlx-hairpin-Hlx_DNA-bd_motif"/>
</dbReference>
<dbReference type="InterPro" id="IPR010994">
    <property type="entry name" value="RuvA_2-like"/>
</dbReference>
<dbReference type="InterPro" id="IPR001943">
    <property type="entry name" value="UVR_dom"/>
</dbReference>
<dbReference type="InterPro" id="IPR036876">
    <property type="entry name" value="UVR_dom_sf"/>
</dbReference>
<dbReference type="InterPro" id="IPR050066">
    <property type="entry name" value="UvrABC_protein_C"/>
</dbReference>
<dbReference type="InterPro" id="IPR004791">
    <property type="entry name" value="UvrC"/>
</dbReference>
<dbReference type="InterPro" id="IPR001162">
    <property type="entry name" value="UvrC_RNase_H_dom"/>
</dbReference>
<dbReference type="InterPro" id="IPR038476">
    <property type="entry name" value="UvrC_RNase_H_dom_sf"/>
</dbReference>
<dbReference type="NCBIfam" id="NF001824">
    <property type="entry name" value="PRK00558.1-5"/>
    <property type="match status" value="1"/>
</dbReference>
<dbReference type="NCBIfam" id="TIGR00194">
    <property type="entry name" value="uvrC"/>
    <property type="match status" value="1"/>
</dbReference>
<dbReference type="PANTHER" id="PTHR30562:SF1">
    <property type="entry name" value="UVRABC SYSTEM PROTEIN C"/>
    <property type="match status" value="1"/>
</dbReference>
<dbReference type="PANTHER" id="PTHR30562">
    <property type="entry name" value="UVRC/OXIDOREDUCTASE"/>
    <property type="match status" value="1"/>
</dbReference>
<dbReference type="Pfam" id="PF01541">
    <property type="entry name" value="GIY-YIG"/>
    <property type="match status" value="1"/>
</dbReference>
<dbReference type="Pfam" id="PF12826">
    <property type="entry name" value="HHH_2"/>
    <property type="match status" value="1"/>
</dbReference>
<dbReference type="Pfam" id="PF02151">
    <property type="entry name" value="UVR"/>
    <property type="match status" value="1"/>
</dbReference>
<dbReference type="Pfam" id="PF22920">
    <property type="entry name" value="UvrC_RNaseH"/>
    <property type="match status" value="1"/>
</dbReference>
<dbReference type="Pfam" id="PF08459">
    <property type="entry name" value="UvrC_RNaseH_dom"/>
    <property type="match status" value="1"/>
</dbReference>
<dbReference type="SMART" id="SM00465">
    <property type="entry name" value="GIYc"/>
    <property type="match status" value="1"/>
</dbReference>
<dbReference type="SMART" id="SM00278">
    <property type="entry name" value="HhH1"/>
    <property type="match status" value="2"/>
</dbReference>
<dbReference type="SUPFAM" id="SSF46600">
    <property type="entry name" value="C-terminal UvrC-binding domain of UvrB"/>
    <property type="match status" value="1"/>
</dbReference>
<dbReference type="SUPFAM" id="SSF82771">
    <property type="entry name" value="GIY-YIG endonuclease"/>
    <property type="match status" value="1"/>
</dbReference>
<dbReference type="SUPFAM" id="SSF47781">
    <property type="entry name" value="RuvA domain 2-like"/>
    <property type="match status" value="1"/>
</dbReference>
<dbReference type="PROSITE" id="PS50164">
    <property type="entry name" value="GIY_YIG"/>
    <property type="match status" value="1"/>
</dbReference>
<dbReference type="PROSITE" id="PS50151">
    <property type="entry name" value="UVR"/>
    <property type="match status" value="1"/>
</dbReference>
<dbReference type="PROSITE" id="PS50165">
    <property type="entry name" value="UVRC"/>
    <property type="match status" value="1"/>
</dbReference>
<name>UVRC_SYNJA</name>
<evidence type="ECO:0000255" key="1">
    <source>
        <dbReference type="HAMAP-Rule" id="MF_00203"/>
    </source>
</evidence>
<gene>
    <name evidence="1" type="primary">uvrC</name>
    <name type="ordered locus">CYA_0207</name>
</gene>
<keyword id="KW-0963">Cytoplasm</keyword>
<keyword id="KW-0227">DNA damage</keyword>
<keyword id="KW-0228">DNA excision</keyword>
<keyword id="KW-0234">DNA repair</keyword>
<keyword id="KW-0267">Excision nuclease</keyword>
<keyword id="KW-0742">SOS response</keyword>
<feature type="chain" id="PRO_0000264966" description="UvrABC system protein C">
    <location>
        <begin position="1"/>
        <end position="621"/>
    </location>
</feature>
<feature type="domain" description="GIY-YIG" evidence="1">
    <location>
        <begin position="21"/>
        <end position="100"/>
    </location>
</feature>
<feature type="domain" description="UVR" evidence="1">
    <location>
        <begin position="210"/>
        <end position="245"/>
    </location>
</feature>
<protein>
    <recommendedName>
        <fullName evidence="1">UvrABC system protein C</fullName>
        <shortName evidence="1">Protein UvrC</shortName>
    </recommendedName>
    <alternativeName>
        <fullName evidence="1">Excinuclease ABC subunit C</fullName>
    </alternativeName>
</protein>
<accession>Q2JXP8</accession>
<reference key="1">
    <citation type="journal article" date="2007" name="ISME J.">
        <title>Population level functional diversity in a microbial community revealed by comparative genomic and metagenomic analyses.</title>
        <authorList>
            <person name="Bhaya D."/>
            <person name="Grossman A.R."/>
            <person name="Steunou A.-S."/>
            <person name="Khuri N."/>
            <person name="Cohan F.M."/>
            <person name="Hamamura N."/>
            <person name="Melendrez M.C."/>
            <person name="Bateson M.M."/>
            <person name="Ward D.M."/>
            <person name="Heidelberg J.F."/>
        </authorList>
    </citation>
    <scope>NUCLEOTIDE SEQUENCE [LARGE SCALE GENOMIC DNA]</scope>
    <source>
        <strain>JA-3-3Ab</strain>
    </source>
</reference>